<name>PLSX_DELAS</name>
<comment type="function">
    <text evidence="1">Catalyzes the reversible formation of acyl-phosphate (acyl-PO(4)) from acyl-[acyl-carrier-protein] (acyl-ACP). This enzyme utilizes acyl-ACP as fatty acyl donor, but not acyl-CoA.</text>
</comment>
<comment type="catalytic activity">
    <reaction evidence="1">
        <text>a fatty acyl-[ACP] + phosphate = an acyl phosphate + holo-[ACP]</text>
        <dbReference type="Rhea" id="RHEA:42292"/>
        <dbReference type="Rhea" id="RHEA-COMP:9685"/>
        <dbReference type="Rhea" id="RHEA-COMP:14125"/>
        <dbReference type="ChEBI" id="CHEBI:43474"/>
        <dbReference type="ChEBI" id="CHEBI:59918"/>
        <dbReference type="ChEBI" id="CHEBI:64479"/>
        <dbReference type="ChEBI" id="CHEBI:138651"/>
        <dbReference type="EC" id="2.3.1.274"/>
    </reaction>
</comment>
<comment type="pathway">
    <text evidence="1">Lipid metabolism; phospholipid metabolism.</text>
</comment>
<comment type="subunit">
    <text evidence="1">Homodimer. Probably interacts with PlsY.</text>
</comment>
<comment type="subcellular location">
    <subcellularLocation>
        <location evidence="1">Cytoplasm</location>
    </subcellularLocation>
    <text evidence="1">Associated with the membrane possibly through PlsY.</text>
</comment>
<comment type="similarity">
    <text evidence="1">Belongs to the PlsX family.</text>
</comment>
<proteinExistence type="inferred from homology"/>
<dbReference type="EC" id="2.3.1.274" evidence="1"/>
<dbReference type="EMBL" id="CP000884">
    <property type="protein sequence ID" value="ABX37902.1"/>
    <property type="molecule type" value="Genomic_DNA"/>
</dbReference>
<dbReference type="RefSeq" id="WP_012207071.1">
    <property type="nucleotide sequence ID" value="NC_010002.1"/>
</dbReference>
<dbReference type="SMR" id="A9BNK7"/>
<dbReference type="STRING" id="398578.Daci_5273"/>
<dbReference type="GeneID" id="24119045"/>
<dbReference type="KEGG" id="dac:Daci_5273"/>
<dbReference type="eggNOG" id="COG0416">
    <property type="taxonomic scope" value="Bacteria"/>
</dbReference>
<dbReference type="HOGENOM" id="CLU_039379_1_0_4"/>
<dbReference type="UniPathway" id="UPA00085"/>
<dbReference type="Proteomes" id="UP000000784">
    <property type="component" value="Chromosome"/>
</dbReference>
<dbReference type="GO" id="GO:0005737">
    <property type="term" value="C:cytoplasm"/>
    <property type="evidence" value="ECO:0007669"/>
    <property type="project" value="UniProtKB-SubCell"/>
</dbReference>
<dbReference type="GO" id="GO:0043811">
    <property type="term" value="F:phosphate:acyl-[acyl carrier protein] acyltransferase activity"/>
    <property type="evidence" value="ECO:0007669"/>
    <property type="project" value="UniProtKB-UniRule"/>
</dbReference>
<dbReference type="GO" id="GO:0006633">
    <property type="term" value="P:fatty acid biosynthetic process"/>
    <property type="evidence" value="ECO:0007669"/>
    <property type="project" value="UniProtKB-UniRule"/>
</dbReference>
<dbReference type="GO" id="GO:0008654">
    <property type="term" value="P:phospholipid biosynthetic process"/>
    <property type="evidence" value="ECO:0007669"/>
    <property type="project" value="UniProtKB-KW"/>
</dbReference>
<dbReference type="Gene3D" id="3.40.718.10">
    <property type="entry name" value="Isopropylmalate Dehydrogenase"/>
    <property type="match status" value="1"/>
</dbReference>
<dbReference type="HAMAP" id="MF_00019">
    <property type="entry name" value="PlsX"/>
    <property type="match status" value="1"/>
</dbReference>
<dbReference type="InterPro" id="IPR003664">
    <property type="entry name" value="FA_synthesis"/>
</dbReference>
<dbReference type="InterPro" id="IPR012281">
    <property type="entry name" value="Phospholipid_synth_PlsX-like"/>
</dbReference>
<dbReference type="NCBIfam" id="TIGR00182">
    <property type="entry name" value="plsX"/>
    <property type="match status" value="1"/>
</dbReference>
<dbReference type="PANTHER" id="PTHR30100">
    <property type="entry name" value="FATTY ACID/PHOSPHOLIPID SYNTHESIS PROTEIN PLSX"/>
    <property type="match status" value="1"/>
</dbReference>
<dbReference type="PANTHER" id="PTHR30100:SF1">
    <property type="entry name" value="PHOSPHATE ACYLTRANSFERASE"/>
    <property type="match status" value="1"/>
</dbReference>
<dbReference type="Pfam" id="PF02504">
    <property type="entry name" value="FA_synthesis"/>
    <property type="match status" value="1"/>
</dbReference>
<dbReference type="PIRSF" id="PIRSF002465">
    <property type="entry name" value="Phsphlp_syn_PlsX"/>
    <property type="match status" value="1"/>
</dbReference>
<dbReference type="SUPFAM" id="SSF53659">
    <property type="entry name" value="Isocitrate/Isopropylmalate dehydrogenase-like"/>
    <property type="match status" value="1"/>
</dbReference>
<organism>
    <name type="scientific">Delftia acidovorans (strain DSM 14801 / SPH-1)</name>
    <dbReference type="NCBI Taxonomy" id="398578"/>
    <lineage>
        <taxon>Bacteria</taxon>
        <taxon>Pseudomonadati</taxon>
        <taxon>Pseudomonadota</taxon>
        <taxon>Betaproteobacteria</taxon>
        <taxon>Burkholderiales</taxon>
        <taxon>Comamonadaceae</taxon>
        <taxon>Delftia</taxon>
    </lineage>
</organism>
<protein>
    <recommendedName>
        <fullName evidence="1">Phosphate acyltransferase</fullName>
        <ecNumber evidence="1">2.3.1.274</ecNumber>
    </recommendedName>
    <alternativeName>
        <fullName evidence="1">Acyl-ACP phosphotransacylase</fullName>
    </alternativeName>
    <alternativeName>
        <fullName evidence="1">Acyl-[acyl-carrier-protein]--phosphate acyltransferase</fullName>
    </alternativeName>
    <alternativeName>
        <fullName evidence="1">Phosphate-acyl-ACP acyltransferase</fullName>
    </alternativeName>
</protein>
<sequence length="346" mass="36333">MITLAVDCMGGDHGPRVTLAACRQFLDSHSDARLLLVGQPDALAGFAHERASVVPASEVVGMDDPIEVALRRKKDSSMRVAIQQVKDGQAAAAVSAGNTGALMAISRYLLKTLDGIDRPAIAPQLPNAKGGATTVLDLGANVDCSAEHLLQFAVMGSALVSALNNEEAPSVGLLNIGEEQIKGSEVIKRAGELLRAAGKAGHLNFYGNVEGNDIFKGTTQVVVCDGFVGNVALKSSEGVASMISNALKQEFKRNIFTKMAAIVAYPVLTALMKRVDHRRHNGAALLGLRGLVFKSHGSADALAFEHALNRAYDAARNNLLDRVRTRISAALPLLLAAQSESGPSAP</sequence>
<gene>
    <name evidence="1" type="primary">plsX</name>
    <name type="ordered locus">Daci_5273</name>
</gene>
<feature type="chain" id="PRO_1000089899" description="Phosphate acyltransferase">
    <location>
        <begin position="1"/>
        <end position="346"/>
    </location>
</feature>
<reference key="1">
    <citation type="submission" date="2007-11" db="EMBL/GenBank/DDBJ databases">
        <title>Complete sequence of Delftia acidovorans DSM 14801 / SPH-1.</title>
        <authorList>
            <person name="Copeland A."/>
            <person name="Lucas S."/>
            <person name="Lapidus A."/>
            <person name="Barry K."/>
            <person name="Glavina del Rio T."/>
            <person name="Dalin E."/>
            <person name="Tice H."/>
            <person name="Pitluck S."/>
            <person name="Lowry S."/>
            <person name="Clum A."/>
            <person name="Schmutz J."/>
            <person name="Larimer F."/>
            <person name="Land M."/>
            <person name="Hauser L."/>
            <person name="Kyrpides N."/>
            <person name="Kim E."/>
            <person name="Schleheck D."/>
            <person name="Richardson P."/>
        </authorList>
    </citation>
    <scope>NUCLEOTIDE SEQUENCE [LARGE SCALE GENOMIC DNA]</scope>
    <source>
        <strain>DSM 14801 / SPH-1</strain>
    </source>
</reference>
<evidence type="ECO:0000255" key="1">
    <source>
        <dbReference type="HAMAP-Rule" id="MF_00019"/>
    </source>
</evidence>
<accession>A9BNK7</accession>
<keyword id="KW-0963">Cytoplasm</keyword>
<keyword id="KW-0444">Lipid biosynthesis</keyword>
<keyword id="KW-0443">Lipid metabolism</keyword>
<keyword id="KW-0594">Phospholipid biosynthesis</keyword>
<keyword id="KW-1208">Phospholipid metabolism</keyword>
<keyword id="KW-1185">Reference proteome</keyword>
<keyword id="KW-0808">Transferase</keyword>